<comment type="function">
    <text evidence="1">Component of the acetyl coenzyme A carboxylase (ACC) complex. First, biotin carboxylase catalyzes the carboxylation of biotin on its carrier protein (BCCP) and then the CO(2) group is transferred by the carboxyltransferase to acetyl-CoA to form malonyl-CoA.</text>
</comment>
<comment type="catalytic activity">
    <reaction evidence="1">
        <text>N(6)-carboxybiotinyl-L-lysyl-[protein] + acetyl-CoA = N(6)-biotinyl-L-lysyl-[protein] + malonyl-CoA</text>
        <dbReference type="Rhea" id="RHEA:54728"/>
        <dbReference type="Rhea" id="RHEA-COMP:10505"/>
        <dbReference type="Rhea" id="RHEA-COMP:10506"/>
        <dbReference type="ChEBI" id="CHEBI:57288"/>
        <dbReference type="ChEBI" id="CHEBI:57384"/>
        <dbReference type="ChEBI" id="CHEBI:83144"/>
        <dbReference type="ChEBI" id="CHEBI:83145"/>
        <dbReference type="EC" id="2.1.3.15"/>
    </reaction>
</comment>
<comment type="pathway">
    <text evidence="1">Lipid metabolism; malonyl-CoA biosynthesis; malonyl-CoA from acetyl-CoA: step 1/1.</text>
</comment>
<comment type="subunit">
    <text evidence="1">Acetyl-CoA carboxylase is a heterohexamer composed of biotin carboxyl carrier protein (AccB), biotin carboxylase (AccC) and two subunits each of ACCase subunit alpha (AccA) and ACCase subunit beta (AccD).</text>
</comment>
<comment type="subcellular location">
    <subcellularLocation>
        <location evidence="1">Cytoplasm</location>
    </subcellularLocation>
</comment>
<comment type="similarity">
    <text evidence="1">Belongs to the AccA family.</text>
</comment>
<accession>A6QHN4</accession>
<dbReference type="EC" id="2.1.3.15" evidence="1"/>
<dbReference type="EMBL" id="AP009351">
    <property type="protein sequence ID" value="BAF67866.1"/>
    <property type="molecule type" value="Genomic_DNA"/>
</dbReference>
<dbReference type="RefSeq" id="WP_000883645.1">
    <property type="nucleotide sequence ID" value="NZ_JBBIAE010000009.1"/>
</dbReference>
<dbReference type="SMR" id="A6QHN4"/>
<dbReference type="KEGG" id="sae:NWMN_1594"/>
<dbReference type="HOGENOM" id="CLU_015486_0_2_9"/>
<dbReference type="UniPathway" id="UPA00655">
    <property type="reaction ID" value="UER00711"/>
</dbReference>
<dbReference type="Proteomes" id="UP000006386">
    <property type="component" value="Chromosome"/>
</dbReference>
<dbReference type="GO" id="GO:0009317">
    <property type="term" value="C:acetyl-CoA carboxylase complex"/>
    <property type="evidence" value="ECO:0007669"/>
    <property type="project" value="InterPro"/>
</dbReference>
<dbReference type="GO" id="GO:0003989">
    <property type="term" value="F:acetyl-CoA carboxylase activity"/>
    <property type="evidence" value="ECO:0007669"/>
    <property type="project" value="InterPro"/>
</dbReference>
<dbReference type="GO" id="GO:0005524">
    <property type="term" value="F:ATP binding"/>
    <property type="evidence" value="ECO:0007669"/>
    <property type="project" value="UniProtKB-KW"/>
</dbReference>
<dbReference type="GO" id="GO:0016743">
    <property type="term" value="F:carboxyl- or carbamoyltransferase activity"/>
    <property type="evidence" value="ECO:0007669"/>
    <property type="project" value="UniProtKB-UniRule"/>
</dbReference>
<dbReference type="GO" id="GO:0006633">
    <property type="term" value="P:fatty acid biosynthetic process"/>
    <property type="evidence" value="ECO:0007669"/>
    <property type="project" value="UniProtKB-KW"/>
</dbReference>
<dbReference type="GO" id="GO:2001295">
    <property type="term" value="P:malonyl-CoA biosynthetic process"/>
    <property type="evidence" value="ECO:0007669"/>
    <property type="project" value="UniProtKB-UniRule"/>
</dbReference>
<dbReference type="Gene3D" id="3.90.226.10">
    <property type="entry name" value="2-enoyl-CoA Hydratase, Chain A, domain 1"/>
    <property type="match status" value="1"/>
</dbReference>
<dbReference type="HAMAP" id="MF_00823">
    <property type="entry name" value="AcetylCoA_CT_alpha"/>
    <property type="match status" value="1"/>
</dbReference>
<dbReference type="InterPro" id="IPR001095">
    <property type="entry name" value="Acetyl_CoA_COase_a_su"/>
</dbReference>
<dbReference type="InterPro" id="IPR029045">
    <property type="entry name" value="ClpP/crotonase-like_dom_sf"/>
</dbReference>
<dbReference type="InterPro" id="IPR011763">
    <property type="entry name" value="COA_CT_C"/>
</dbReference>
<dbReference type="NCBIfam" id="TIGR00513">
    <property type="entry name" value="accA"/>
    <property type="match status" value="1"/>
</dbReference>
<dbReference type="NCBIfam" id="NF041504">
    <property type="entry name" value="AccA_sub"/>
    <property type="match status" value="1"/>
</dbReference>
<dbReference type="NCBIfam" id="NF004344">
    <property type="entry name" value="PRK05724.1"/>
    <property type="match status" value="1"/>
</dbReference>
<dbReference type="PANTHER" id="PTHR42853">
    <property type="entry name" value="ACETYL-COENZYME A CARBOXYLASE CARBOXYL TRANSFERASE SUBUNIT ALPHA"/>
    <property type="match status" value="1"/>
</dbReference>
<dbReference type="PANTHER" id="PTHR42853:SF3">
    <property type="entry name" value="ACETYL-COENZYME A CARBOXYLASE CARBOXYL TRANSFERASE SUBUNIT ALPHA, CHLOROPLASTIC"/>
    <property type="match status" value="1"/>
</dbReference>
<dbReference type="Pfam" id="PF03255">
    <property type="entry name" value="ACCA"/>
    <property type="match status" value="1"/>
</dbReference>
<dbReference type="PRINTS" id="PR01069">
    <property type="entry name" value="ACCCTRFRASEA"/>
</dbReference>
<dbReference type="SUPFAM" id="SSF52096">
    <property type="entry name" value="ClpP/crotonase"/>
    <property type="match status" value="1"/>
</dbReference>
<dbReference type="PROSITE" id="PS50989">
    <property type="entry name" value="COA_CT_CTER"/>
    <property type="match status" value="1"/>
</dbReference>
<sequence>MLDFEKPLFEIRNKIESLKESQDKNDVDLQEEIDMLEASLERETKKIYTNLKPWDRVQIARLQERPTTLDYIPYIFDSFMELHGDRNFRDDPAMIGGIGFLNGRAVTVIGQQRGKDTKDNIYRNFGMAHPEGYRKALRLMKQAEKFNRPIFTFIDTKGAYPGKAAEERGQSESIATNLIEMASLKVPVIAIVIGEGGSGGALGIGIANKVLMLENSTYSVISPEGAAALLWKDSNLAKIAAETMKITAHDIKQLGIIDDVISEPLGGAHKDIEQQALAIKSAFVAQLDSLESLSRDEIANDRFEKFRNIGSYIE</sequence>
<protein>
    <recommendedName>
        <fullName evidence="1">Acetyl-coenzyme A carboxylase carboxyl transferase subunit alpha</fullName>
        <shortName evidence="1">ACCase subunit alpha</shortName>
        <shortName evidence="1">Acetyl-CoA carboxylase carboxyltransferase subunit alpha</shortName>
        <ecNumber evidence="1">2.1.3.15</ecNumber>
    </recommendedName>
</protein>
<keyword id="KW-0067">ATP-binding</keyword>
<keyword id="KW-0963">Cytoplasm</keyword>
<keyword id="KW-0275">Fatty acid biosynthesis</keyword>
<keyword id="KW-0276">Fatty acid metabolism</keyword>
<keyword id="KW-0444">Lipid biosynthesis</keyword>
<keyword id="KW-0443">Lipid metabolism</keyword>
<keyword id="KW-0547">Nucleotide-binding</keyword>
<keyword id="KW-0808">Transferase</keyword>
<organism>
    <name type="scientific">Staphylococcus aureus (strain Newman)</name>
    <dbReference type="NCBI Taxonomy" id="426430"/>
    <lineage>
        <taxon>Bacteria</taxon>
        <taxon>Bacillati</taxon>
        <taxon>Bacillota</taxon>
        <taxon>Bacilli</taxon>
        <taxon>Bacillales</taxon>
        <taxon>Staphylococcaceae</taxon>
        <taxon>Staphylococcus</taxon>
    </lineage>
</organism>
<name>ACCA_STAAE</name>
<feature type="chain" id="PRO_1000072885" description="Acetyl-coenzyme A carboxylase carboxyl transferase subunit alpha">
    <location>
        <begin position="1"/>
        <end position="314"/>
    </location>
</feature>
<feature type="domain" description="CoA carboxyltransferase C-terminal" evidence="2">
    <location>
        <begin position="32"/>
        <end position="289"/>
    </location>
</feature>
<proteinExistence type="inferred from homology"/>
<gene>
    <name evidence="1" type="primary">accA</name>
    <name type="ordered locus">NWMN_1594</name>
</gene>
<reference key="1">
    <citation type="journal article" date="2008" name="J. Bacteriol.">
        <title>Genome sequence of Staphylococcus aureus strain Newman and comparative analysis of staphylococcal genomes: polymorphism and evolution of two major pathogenicity islands.</title>
        <authorList>
            <person name="Baba T."/>
            <person name="Bae T."/>
            <person name="Schneewind O."/>
            <person name="Takeuchi F."/>
            <person name="Hiramatsu K."/>
        </authorList>
    </citation>
    <scope>NUCLEOTIDE SEQUENCE [LARGE SCALE GENOMIC DNA]</scope>
    <source>
        <strain>Newman</strain>
    </source>
</reference>
<evidence type="ECO:0000255" key="1">
    <source>
        <dbReference type="HAMAP-Rule" id="MF_00823"/>
    </source>
</evidence>
<evidence type="ECO:0000255" key="2">
    <source>
        <dbReference type="PROSITE-ProRule" id="PRU01137"/>
    </source>
</evidence>